<sequence length="413" mass="42853">MTNSTDGRADGRLRVVVLGSTGSIGTQALQVIADNPDRFEVVGLAAGGAHLDTLLRQRAQTGVTNIAVADEHAAQRVGDIPYHGSDAATRLVEQTEADVVLNALVGALGLRPTLAALKTGARLALANKESLVAGGSLVLRAARPGQIVPVDSEHSALAQCLRGGTPDEVAKLVLTASGGPFRGWSAADLEHVTPEQAGAHPTWSMGPMNTLNSASLVNKGLEVIETHLLFGIPYDRIDVVVHPQSIIHSMVTFIDGSTIAQASPPDMKLPISLALGWPRRVSGAAAACDFHTASSWEFEPLDTDVFPAVELARQAGVAGGCMTAVYNAANEEAAAAFLAGRIGFPAIVGIIADVLHAADQWAVEPATVDDVLDAQRWARERAQRAVSGMASVAIASTAKPGAAGRHASTLERS</sequence>
<reference key="1">
    <citation type="journal article" date="2002" name="J. Bacteriol.">
        <title>Whole-genome comparison of Mycobacterium tuberculosis clinical and laboratory strains.</title>
        <authorList>
            <person name="Fleischmann R.D."/>
            <person name="Alland D."/>
            <person name="Eisen J.A."/>
            <person name="Carpenter L."/>
            <person name="White O."/>
            <person name="Peterson J.D."/>
            <person name="DeBoy R.T."/>
            <person name="Dodson R.J."/>
            <person name="Gwinn M.L."/>
            <person name="Haft D.H."/>
            <person name="Hickey E.K."/>
            <person name="Kolonay J.F."/>
            <person name="Nelson W.C."/>
            <person name="Umayam L.A."/>
            <person name="Ermolaeva M.D."/>
            <person name="Salzberg S.L."/>
            <person name="Delcher A."/>
            <person name="Utterback T.R."/>
            <person name="Weidman J.F."/>
            <person name="Khouri H.M."/>
            <person name="Gill J."/>
            <person name="Mikula A."/>
            <person name="Bishai W."/>
            <person name="Jacobs W.R. Jr."/>
            <person name="Venter J.C."/>
            <person name="Fraser C.M."/>
        </authorList>
    </citation>
    <scope>NUCLEOTIDE SEQUENCE [LARGE SCALE GENOMIC DNA]</scope>
    <source>
        <strain>CDC 1551 / Oshkosh</strain>
    </source>
</reference>
<feature type="chain" id="PRO_0000427078" description="1-deoxy-D-xylulose 5-phosphate reductoisomerase">
    <location>
        <begin position="1"/>
        <end position="413"/>
    </location>
</feature>
<feature type="binding site" evidence="1">
    <location>
        <position position="21"/>
    </location>
    <ligand>
        <name>NADPH</name>
        <dbReference type="ChEBI" id="CHEBI:57783"/>
    </ligand>
</feature>
<feature type="binding site" evidence="1">
    <location>
        <position position="22"/>
    </location>
    <ligand>
        <name>NADPH</name>
        <dbReference type="ChEBI" id="CHEBI:57783"/>
    </ligand>
</feature>
<feature type="binding site" evidence="1">
    <location>
        <position position="23"/>
    </location>
    <ligand>
        <name>NADPH</name>
        <dbReference type="ChEBI" id="CHEBI:57783"/>
    </ligand>
</feature>
<feature type="binding site" evidence="1">
    <location>
        <position position="24"/>
    </location>
    <ligand>
        <name>NADPH</name>
        <dbReference type="ChEBI" id="CHEBI:57783"/>
    </ligand>
</feature>
<feature type="binding site" evidence="1">
    <location>
        <position position="47"/>
    </location>
    <ligand>
        <name>NADPH</name>
        <dbReference type="ChEBI" id="CHEBI:57783"/>
    </ligand>
</feature>
<feature type="binding site" evidence="1">
    <location>
        <position position="127"/>
    </location>
    <ligand>
        <name>NADPH</name>
        <dbReference type="ChEBI" id="CHEBI:57783"/>
    </ligand>
</feature>
<feature type="binding site" evidence="1">
    <location>
        <position position="128"/>
    </location>
    <ligand>
        <name>1-deoxy-D-xylulose 5-phosphate</name>
        <dbReference type="ChEBI" id="CHEBI:57792"/>
    </ligand>
</feature>
<feature type="binding site" evidence="1">
    <location>
        <position position="129"/>
    </location>
    <ligand>
        <name>NADPH</name>
        <dbReference type="ChEBI" id="CHEBI:57783"/>
    </ligand>
</feature>
<feature type="binding site" evidence="1">
    <location>
        <position position="151"/>
    </location>
    <ligand>
        <name>Mn(2+)</name>
        <dbReference type="ChEBI" id="CHEBI:29035"/>
    </ligand>
</feature>
<feature type="binding site" evidence="1">
    <location>
        <position position="152"/>
    </location>
    <ligand>
        <name>1-deoxy-D-xylulose 5-phosphate</name>
        <dbReference type="ChEBI" id="CHEBI:57792"/>
    </ligand>
</feature>
<feature type="binding site" evidence="1">
    <location>
        <position position="153"/>
    </location>
    <ligand>
        <name>1-deoxy-D-xylulose 5-phosphate</name>
        <dbReference type="ChEBI" id="CHEBI:57792"/>
    </ligand>
</feature>
<feature type="binding site" evidence="1">
    <location>
        <position position="153"/>
    </location>
    <ligand>
        <name>Mn(2+)</name>
        <dbReference type="ChEBI" id="CHEBI:29035"/>
    </ligand>
</feature>
<feature type="binding site" evidence="1">
    <location>
        <position position="177"/>
    </location>
    <ligand>
        <name>1-deoxy-D-xylulose 5-phosphate</name>
        <dbReference type="ChEBI" id="CHEBI:57792"/>
    </ligand>
</feature>
<feature type="binding site" evidence="1">
    <location>
        <position position="200"/>
    </location>
    <ligand>
        <name>1-deoxy-D-xylulose 5-phosphate</name>
        <dbReference type="ChEBI" id="CHEBI:57792"/>
    </ligand>
</feature>
<feature type="binding site" evidence="1">
    <location>
        <position position="206"/>
    </location>
    <ligand>
        <name>NADPH</name>
        <dbReference type="ChEBI" id="CHEBI:57783"/>
    </ligand>
</feature>
<feature type="binding site" evidence="1">
    <location>
        <position position="213"/>
    </location>
    <ligand>
        <name>1-deoxy-D-xylulose 5-phosphate</name>
        <dbReference type="ChEBI" id="CHEBI:57792"/>
    </ligand>
</feature>
<feature type="binding site" evidence="1">
    <location>
        <position position="218"/>
    </location>
    <ligand>
        <name>1-deoxy-D-xylulose 5-phosphate</name>
        <dbReference type="ChEBI" id="CHEBI:57792"/>
    </ligand>
</feature>
<feature type="binding site" evidence="1">
    <location>
        <position position="219"/>
    </location>
    <ligand>
        <name>1-deoxy-D-xylulose 5-phosphate</name>
        <dbReference type="ChEBI" id="CHEBI:57792"/>
    </ligand>
</feature>
<feature type="binding site" evidence="1">
    <location>
        <position position="222"/>
    </location>
    <ligand>
        <name>1-deoxy-D-xylulose 5-phosphate</name>
        <dbReference type="ChEBI" id="CHEBI:57792"/>
    </ligand>
</feature>
<feature type="binding site" evidence="1">
    <location>
        <position position="222"/>
    </location>
    <ligand>
        <name>Mn(2+)</name>
        <dbReference type="ChEBI" id="CHEBI:29035"/>
    </ligand>
</feature>
<accession>P9WNS0</accession>
<accession>L0TDT3</accession>
<accession>P64012</accession>
<accession>Q10798</accession>
<evidence type="ECO:0000255" key="1">
    <source>
        <dbReference type="HAMAP-Rule" id="MF_00183"/>
    </source>
</evidence>
<evidence type="ECO:0000305" key="2"/>
<name>DXR_MYCTO</name>
<protein>
    <recommendedName>
        <fullName evidence="1">1-deoxy-D-xylulose 5-phosphate reductoisomerase</fullName>
        <shortName evidence="1">DXP reductoisomerase</shortName>
        <ecNumber evidence="1">1.1.1.267</ecNumber>
    </recommendedName>
    <alternativeName>
        <fullName evidence="1">1-deoxyxylulose-5-phosphate reductoisomerase</fullName>
    </alternativeName>
    <alternativeName>
        <fullName evidence="1">2-C-methyl-D-erythritol 4-phosphate synthase</fullName>
    </alternativeName>
</protein>
<dbReference type="EC" id="1.1.1.267" evidence="1"/>
<dbReference type="EMBL" id="AE000516">
    <property type="protein sequence ID" value="AAK47263.1"/>
    <property type="status" value="ALT_INIT"/>
    <property type="molecule type" value="Genomic_DNA"/>
</dbReference>
<dbReference type="PIR" id="A70923">
    <property type="entry name" value="A70923"/>
</dbReference>
<dbReference type="RefSeq" id="WP_003414613.1">
    <property type="nucleotide sequence ID" value="NZ_KK341227.1"/>
</dbReference>
<dbReference type="SMR" id="P9WNS0"/>
<dbReference type="GeneID" id="45426858"/>
<dbReference type="KEGG" id="mtc:MT2938"/>
<dbReference type="PATRIC" id="fig|83331.31.peg.3173"/>
<dbReference type="HOGENOM" id="CLU_035714_4_0_11"/>
<dbReference type="UniPathway" id="UPA00056">
    <property type="reaction ID" value="UER00092"/>
</dbReference>
<dbReference type="Proteomes" id="UP000001020">
    <property type="component" value="Chromosome"/>
</dbReference>
<dbReference type="GO" id="GO:0030604">
    <property type="term" value="F:1-deoxy-D-xylulose-5-phosphate reductoisomerase activity"/>
    <property type="evidence" value="ECO:0007669"/>
    <property type="project" value="UniProtKB-UniRule"/>
</dbReference>
<dbReference type="GO" id="GO:0030145">
    <property type="term" value="F:manganese ion binding"/>
    <property type="evidence" value="ECO:0007669"/>
    <property type="project" value="TreeGrafter"/>
</dbReference>
<dbReference type="GO" id="GO:0070402">
    <property type="term" value="F:NADPH binding"/>
    <property type="evidence" value="ECO:0007669"/>
    <property type="project" value="InterPro"/>
</dbReference>
<dbReference type="GO" id="GO:0051484">
    <property type="term" value="P:isopentenyl diphosphate biosynthetic process, methylerythritol 4-phosphate pathway involved in terpenoid biosynthetic process"/>
    <property type="evidence" value="ECO:0007669"/>
    <property type="project" value="TreeGrafter"/>
</dbReference>
<dbReference type="FunFam" id="1.10.1740.10:FF:000024">
    <property type="entry name" value="1-deoxy-D-xylulose 5-phosphate reductoisomerase"/>
    <property type="match status" value="1"/>
</dbReference>
<dbReference type="FunFam" id="3.40.50.720:FF:000045">
    <property type="entry name" value="1-deoxy-D-xylulose 5-phosphate reductoisomerase"/>
    <property type="match status" value="1"/>
</dbReference>
<dbReference type="Gene3D" id="1.10.1740.10">
    <property type="match status" value="1"/>
</dbReference>
<dbReference type="Gene3D" id="3.40.50.720">
    <property type="entry name" value="NAD(P)-binding Rossmann-like Domain"/>
    <property type="match status" value="1"/>
</dbReference>
<dbReference type="HAMAP" id="MF_00183">
    <property type="entry name" value="DXP_reductoisom"/>
    <property type="match status" value="1"/>
</dbReference>
<dbReference type="InterPro" id="IPR003821">
    <property type="entry name" value="DXP_reductoisomerase"/>
</dbReference>
<dbReference type="InterPro" id="IPR013644">
    <property type="entry name" value="DXP_reductoisomerase_C"/>
</dbReference>
<dbReference type="InterPro" id="IPR013512">
    <property type="entry name" value="DXP_reductoisomerase_N"/>
</dbReference>
<dbReference type="InterPro" id="IPR026877">
    <property type="entry name" value="DXPR_C"/>
</dbReference>
<dbReference type="InterPro" id="IPR036169">
    <property type="entry name" value="DXPR_C_sf"/>
</dbReference>
<dbReference type="InterPro" id="IPR036291">
    <property type="entry name" value="NAD(P)-bd_dom_sf"/>
</dbReference>
<dbReference type="NCBIfam" id="TIGR00243">
    <property type="entry name" value="Dxr"/>
    <property type="match status" value="1"/>
</dbReference>
<dbReference type="PANTHER" id="PTHR30525">
    <property type="entry name" value="1-DEOXY-D-XYLULOSE 5-PHOSPHATE REDUCTOISOMERASE"/>
    <property type="match status" value="1"/>
</dbReference>
<dbReference type="PANTHER" id="PTHR30525:SF0">
    <property type="entry name" value="1-DEOXY-D-XYLULOSE 5-PHOSPHATE REDUCTOISOMERASE, CHLOROPLASTIC"/>
    <property type="match status" value="1"/>
</dbReference>
<dbReference type="Pfam" id="PF08436">
    <property type="entry name" value="DXP_redisom_C"/>
    <property type="match status" value="1"/>
</dbReference>
<dbReference type="Pfam" id="PF02670">
    <property type="entry name" value="DXP_reductoisom"/>
    <property type="match status" value="1"/>
</dbReference>
<dbReference type="Pfam" id="PF13288">
    <property type="entry name" value="DXPR_C"/>
    <property type="match status" value="1"/>
</dbReference>
<dbReference type="PIRSF" id="PIRSF006205">
    <property type="entry name" value="Dxp_reductismrs"/>
    <property type="match status" value="1"/>
</dbReference>
<dbReference type="SUPFAM" id="SSF69055">
    <property type="entry name" value="1-deoxy-D-xylulose-5-phosphate reductoisomerase, C-terminal domain"/>
    <property type="match status" value="1"/>
</dbReference>
<dbReference type="SUPFAM" id="SSF55347">
    <property type="entry name" value="Glyceraldehyde-3-phosphate dehydrogenase-like, C-terminal domain"/>
    <property type="match status" value="1"/>
</dbReference>
<dbReference type="SUPFAM" id="SSF51735">
    <property type="entry name" value="NAD(P)-binding Rossmann-fold domains"/>
    <property type="match status" value="1"/>
</dbReference>
<keyword id="KW-0414">Isoprene biosynthesis</keyword>
<keyword id="KW-0464">Manganese</keyword>
<keyword id="KW-0479">Metal-binding</keyword>
<keyword id="KW-0521">NADP</keyword>
<keyword id="KW-0560">Oxidoreductase</keyword>
<keyword id="KW-1185">Reference proteome</keyword>
<gene>
    <name evidence="1" type="primary">dxr</name>
    <name type="ordered locus">MT2938</name>
</gene>
<proteinExistence type="inferred from homology"/>
<organism>
    <name type="scientific">Mycobacterium tuberculosis (strain CDC 1551 / Oshkosh)</name>
    <dbReference type="NCBI Taxonomy" id="83331"/>
    <lineage>
        <taxon>Bacteria</taxon>
        <taxon>Bacillati</taxon>
        <taxon>Actinomycetota</taxon>
        <taxon>Actinomycetes</taxon>
        <taxon>Mycobacteriales</taxon>
        <taxon>Mycobacteriaceae</taxon>
        <taxon>Mycobacterium</taxon>
        <taxon>Mycobacterium tuberculosis complex</taxon>
    </lineage>
</organism>
<comment type="function">
    <text evidence="1">Catalyzes the NADPH-dependent rearrangement and reduction of 1-deoxy-D-xylulose-5-phosphate (DXP) to 2-C-methyl-D-erythritol 4-phosphate (MEP).</text>
</comment>
<comment type="catalytic activity">
    <reaction evidence="1">
        <text>2-C-methyl-D-erythritol 4-phosphate + NADP(+) = 1-deoxy-D-xylulose 5-phosphate + NADPH + H(+)</text>
        <dbReference type="Rhea" id="RHEA:13717"/>
        <dbReference type="ChEBI" id="CHEBI:15378"/>
        <dbReference type="ChEBI" id="CHEBI:57783"/>
        <dbReference type="ChEBI" id="CHEBI:57792"/>
        <dbReference type="ChEBI" id="CHEBI:58262"/>
        <dbReference type="ChEBI" id="CHEBI:58349"/>
        <dbReference type="EC" id="1.1.1.267"/>
    </reaction>
    <physiologicalReaction direction="right-to-left" evidence="1">
        <dbReference type="Rhea" id="RHEA:13719"/>
    </physiologicalReaction>
</comment>
<comment type="cofactor">
    <cofactor evidence="1">
        <name>Mg(2+)</name>
        <dbReference type="ChEBI" id="CHEBI:18420"/>
    </cofactor>
    <cofactor evidence="1">
        <name>Mn(2+)</name>
        <dbReference type="ChEBI" id="CHEBI:29035"/>
    </cofactor>
</comment>
<comment type="pathway">
    <text evidence="1">Isoprenoid biosynthesis; isopentenyl diphosphate biosynthesis via DXP pathway; isopentenyl diphosphate from 1-deoxy-D-xylulose 5-phosphate: step 1/6.</text>
</comment>
<comment type="similarity">
    <text evidence="1">Belongs to the DXR family.</text>
</comment>
<comment type="sequence caution" evidence="2">
    <conflict type="erroneous initiation">
        <sequence resource="EMBL-CDS" id="AAK47263"/>
    </conflict>
</comment>